<proteinExistence type="evidence at protein level"/>
<reference key="1">
    <citation type="journal article" date="2000" name="Nature">
        <title>Sequence and analysis of chromosome 5 of the plant Arabidopsis thaliana.</title>
        <authorList>
            <person name="Tabata S."/>
            <person name="Kaneko T."/>
            <person name="Nakamura Y."/>
            <person name="Kotani H."/>
            <person name="Kato T."/>
            <person name="Asamizu E."/>
            <person name="Miyajima N."/>
            <person name="Sasamoto S."/>
            <person name="Kimura T."/>
            <person name="Hosouchi T."/>
            <person name="Kawashima K."/>
            <person name="Kohara M."/>
            <person name="Matsumoto M."/>
            <person name="Matsuno A."/>
            <person name="Muraki A."/>
            <person name="Nakayama S."/>
            <person name="Nakazaki N."/>
            <person name="Naruo K."/>
            <person name="Okumura S."/>
            <person name="Shinpo S."/>
            <person name="Takeuchi C."/>
            <person name="Wada T."/>
            <person name="Watanabe A."/>
            <person name="Yamada M."/>
            <person name="Yasuda M."/>
            <person name="Sato S."/>
            <person name="de la Bastide M."/>
            <person name="Huang E."/>
            <person name="Spiegel L."/>
            <person name="Gnoj L."/>
            <person name="O'Shaughnessy A."/>
            <person name="Preston R."/>
            <person name="Habermann K."/>
            <person name="Murray J."/>
            <person name="Johnson D."/>
            <person name="Rohlfing T."/>
            <person name="Nelson J."/>
            <person name="Stoneking T."/>
            <person name="Pepin K."/>
            <person name="Spieth J."/>
            <person name="Sekhon M."/>
            <person name="Armstrong J."/>
            <person name="Becker M."/>
            <person name="Belter E."/>
            <person name="Cordum H."/>
            <person name="Cordes M."/>
            <person name="Courtney L."/>
            <person name="Courtney W."/>
            <person name="Dante M."/>
            <person name="Du H."/>
            <person name="Edwards J."/>
            <person name="Fryman J."/>
            <person name="Haakensen B."/>
            <person name="Lamar E."/>
            <person name="Latreille P."/>
            <person name="Leonard S."/>
            <person name="Meyer R."/>
            <person name="Mulvaney E."/>
            <person name="Ozersky P."/>
            <person name="Riley A."/>
            <person name="Strowmatt C."/>
            <person name="Wagner-McPherson C."/>
            <person name="Wollam A."/>
            <person name="Yoakum M."/>
            <person name="Bell M."/>
            <person name="Dedhia N."/>
            <person name="Parnell L."/>
            <person name="Shah R."/>
            <person name="Rodriguez M."/>
            <person name="Hoon See L."/>
            <person name="Vil D."/>
            <person name="Baker J."/>
            <person name="Kirchoff K."/>
            <person name="Toth K."/>
            <person name="King L."/>
            <person name="Bahret A."/>
            <person name="Miller B."/>
            <person name="Marra M.A."/>
            <person name="Martienssen R."/>
            <person name="McCombie W.R."/>
            <person name="Wilson R.K."/>
            <person name="Murphy G."/>
            <person name="Bancroft I."/>
            <person name="Volckaert G."/>
            <person name="Wambutt R."/>
            <person name="Duesterhoeft A."/>
            <person name="Stiekema W."/>
            <person name="Pohl T."/>
            <person name="Entian K.-D."/>
            <person name="Terryn N."/>
            <person name="Hartley N."/>
            <person name="Bent E."/>
            <person name="Johnson S."/>
            <person name="Langham S.-A."/>
            <person name="McCullagh B."/>
            <person name="Robben J."/>
            <person name="Grymonprez B."/>
            <person name="Zimmermann W."/>
            <person name="Ramsperger U."/>
            <person name="Wedler H."/>
            <person name="Balke K."/>
            <person name="Wedler E."/>
            <person name="Peters S."/>
            <person name="van Staveren M."/>
            <person name="Dirkse W."/>
            <person name="Mooijman P."/>
            <person name="Klein Lankhorst R."/>
            <person name="Weitzenegger T."/>
            <person name="Bothe G."/>
            <person name="Rose M."/>
            <person name="Hauf J."/>
            <person name="Berneiser S."/>
            <person name="Hempel S."/>
            <person name="Feldpausch M."/>
            <person name="Lamberth S."/>
            <person name="Villarroel R."/>
            <person name="Gielen J."/>
            <person name="Ardiles W."/>
            <person name="Bents O."/>
            <person name="Lemcke K."/>
            <person name="Kolesov G."/>
            <person name="Mayer K.F.X."/>
            <person name="Rudd S."/>
            <person name="Schoof H."/>
            <person name="Schueller C."/>
            <person name="Zaccaria P."/>
            <person name="Mewes H.-W."/>
            <person name="Bevan M."/>
            <person name="Fransz P.F."/>
        </authorList>
    </citation>
    <scope>NUCLEOTIDE SEQUENCE [LARGE SCALE GENOMIC DNA]</scope>
    <source>
        <strain evidence="10">cv. Columbia</strain>
    </source>
</reference>
<reference key="2">
    <citation type="journal article" date="2017" name="Plant J.">
        <title>Araport11: a complete reannotation of the Arabidopsis thaliana reference genome.</title>
        <authorList>
            <person name="Cheng C.Y."/>
            <person name="Krishnakumar V."/>
            <person name="Chan A.P."/>
            <person name="Thibaud-Nissen F."/>
            <person name="Schobel S."/>
            <person name="Town C.D."/>
        </authorList>
    </citation>
    <scope>GENOME REANNOTATION</scope>
    <source>
        <strain>cv. Columbia</strain>
    </source>
</reference>
<reference key="3">
    <citation type="journal article" date="2009" name="Plant J.">
        <title>The cell morphogenesis gene SPIRRIG in Arabidopsis encodes a WD/BEACH domain protein.</title>
        <authorList>
            <person name="Saedler R."/>
            <person name="Jakoby M."/>
            <person name="Marin B."/>
            <person name="Galiana-Jaime E."/>
            <person name="Hulskamp M."/>
        </authorList>
    </citation>
    <scope>IDENTIFICATION</scope>
    <scope>NUCLEOTIDE SEQUENCE [MRNA] OF 737-1129</scope>
</reference>
<reference key="4">
    <citation type="journal article" date="2003" name="Science">
        <title>Empirical analysis of transcriptional activity in the Arabidopsis genome.</title>
        <authorList>
            <person name="Yamada K."/>
            <person name="Lim J."/>
            <person name="Dale J.M."/>
            <person name="Chen H."/>
            <person name="Shinn P."/>
            <person name="Palm C.J."/>
            <person name="Southwick A.M."/>
            <person name="Wu H.C."/>
            <person name="Kim C.J."/>
            <person name="Nguyen M."/>
            <person name="Pham P.K."/>
            <person name="Cheuk R.F."/>
            <person name="Karlin-Newmann G."/>
            <person name="Liu S.X."/>
            <person name="Lam B."/>
            <person name="Sakano H."/>
            <person name="Wu T."/>
            <person name="Yu G."/>
            <person name="Miranda M."/>
            <person name="Quach H.L."/>
            <person name="Tripp M."/>
            <person name="Chang C.H."/>
            <person name="Lee J.M."/>
            <person name="Toriumi M.J."/>
            <person name="Chan M.M."/>
            <person name="Tang C.C."/>
            <person name="Onodera C.S."/>
            <person name="Deng J.M."/>
            <person name="Akiyama K."/>
            <person name="Ansari Y."/>
            <person name="Arakawa T."/>
            <person name="Banh J."/>
            <person name="Banno F."/>
            <person name="Bowser L."/>
            <person name="Brooks S.Y."/>
            <person name="Carninci P."/>
            <person name="Chao Q."/>
            <person name="Choy N."/>
            <person name="Enju A."/>
            <person name="Goldsmith A.D."/>
            <person name="Gurjal M."/>
            <person name="Hansen N.F."/>
            <person name="Hayashizaki Y."/>
            <person name="Johnson-Hopson C."/>
            <person name="Hsuan V.W."/>
            <person name="Iida K."/>
            <person name="Karnes M."/>
            <person name="Khan S."/>
            <person name="Koesema E."/>
            <person name="Ishida J."/>
            <person name="Jiang P.X."/>
            <person name="Jones T."/>
            <person name="Kawai J."/>
            <person name="Kamiya A."/>
            <person name="Meyers C."/>
            <person name="Nakajima M."/>
            <person name="Narusaka M."/>
            <person name="Seki M."/>
            <person name="Sakurai T."/>
            <person name="Satou M."/>
            <person name="Tamse R."/>
            <person name="Vaysberg M."/>
            <person name="Wallender E.K."/>
            <person name="Wong C."/>
            <person name="Yamamura Y."/>
            <person name="Yuan S."/>
            <person name="Shinozaki K."/>
            <person name="Davis R.W."/>
            <person name="Theologis A."/>
            <person name="Ecker J.R."/>
        </authorList>
    </citation>
    <scope>NUCLEOTIDE SEQUENCE [LARGE SCALE MRNA] OF 1052-1639</scope>
    <source>
        <strain>cv. Columbia</strain>
    </source>
</reference>
<reference key="5">
    <citation type="journal article" date="2015" name="Mol. Plant">
        <title>BEACH-domain proteins act together in a cascade to mediate vacuolar protein trafficking and disease resistance in Arabidopsis.</title>
        <authorList>
            <person name="Teh O.K."/>
            <person name="Hatsugai N."/>
            <person name="Tamura K."/>
            <person name="Fuji K."/>
            <person name="Tabata R."/>
            <person name="Yamaguchi K."/>
            <person name="Shingenobu S."/>
            <person name="Yamada M."/>
            <person name="Hasebe M."/>
            <person name="Sawa S."/>
            <person name="Shimada T."/>
            <person name="Hara-Nishimura I."/>
        </authorList>
    </citation>
    <scope>FUNCTION</scope>
    <scope>DISRUPTION PHENOTYPE</scope>
    <scope>TISSUE SPECIFICITY</scope>
    <scope>GENE FAMILY</scope>
    <scope>NOMENCLATURE</scope>
    <scope>INTERACTION WITH BCHC1</scope>
</reference>
<comment type="function">
    <text evidence="5">May act predominantly to suppress BCHC1, which itself is a negative factor in protein storage vacuole (PSV) trafficking regulation and plant effector triggered immunity (ETI). Required for ETI, but not for cell death.</text>
</comment>
<comment type="subunit">
    <text evidence="5">Interacts (via protein kinase 2 domain) with BCHC1 (via PH-BEACH domain).</text>
</comment>
<comment type="tissue specificity">
    <text evidence="5">Weakly expressed in the cotyledons of germinating seedlings. Restricted to the vascular tissues of cotyledons. Detected in root tips, apical meristem, young flower buds and receptacles.</text>
</comment>
<comment type="disruption phenotype">
    <text evidence="5">No visible phenotype. Accumulation of unprocessed 12S globulin in the seeds.</text>
</comment>
<comment type="similarity">
    <text evidence="3">Belongs to the protein kinase superfamily. Tyr protein kinase family.</text>
</comment>
<comment type="sequence caution" evidence="7">
    <conflict type="erroneous initiation">
        <sequence resource="EMBL-CDS" id="AAL36064"/>
    </conflict>
    <text>Truncated N-terminus.</text>
</comment>
<sequence>MRGEDSDLCFDCLDQRINSDFSDQIVFSYGVSDSPLPFGSSAVVKVSDSSEEFSASCSSCESTSSQFILEYLRKDEHGCLAKYVDKFVVKDREGNSNDAVESDECLDCSTSGSQATEDDDTENITCGSVTCEHSGSFSCWRTVAALLPIAQIRKCSASELQKLASSFHYECPEDQILASLHRLIDGKSSGQATHSFLCLLLGLPLLEEKSKLRCLRHPNLSPVLGLLTSSDCLVSVLPKAPYTLENILYYSPSAIKSEWHRNFIIYQLLSALAHLHGLKVSHGDIRPSNILLSDSLWSWLTIYSKPDLGSVDANSSASRRRWCVEGCYSYGLYADLKISSHLDWQTHFDKWWKGELSNFEYLLVLNKLAGRRWGDHTFHPVMPWVIDFSKKPENDSDSGWRDLRKSKWRLAKGDEQLDFTYSTFEFPHHVSDECLSELAVCSYKARRLPLSVLRKAVRSVYEPNEYPSDMQRLYDWTPDECIPEFYCDPRIFCSLHPSMSDLAVPPWASSPDEFIRLHRDALESPHVSSLIHHWIDITFGYKMSGHAAITAKNVMLSSSEPTVPRSVGRRQLFFRPHPVRLGFSREKEQSRNELEMHTFHGFGVDNKRSVILLADEYLEETEEASAFSDHATHLCPKYHLRENLVESPLHVSYSENTKKVNTSLPGTSKNKGLSSRISLNYLLEHMEVRDEASTELQELLQWRQDFCTGNISKDIAGDIFSIGCVLAELYLMKPLFNSVSLATYLEGGDLPELIKELPPPTQVIVEACIEQDWRRRPSAKSLLDSPYFSATVRSAHLFAAPLQLLAKGQTRLCYAASFAKQGVLKVMGTFVAEMCAVYCLPLVTTPLSEDECELAYVLLKEFTKSLTPMAVQRLVLPSIQKILLTTGYSHLKVSLLQDSFVRELWNQIGKRVYLEMIHPLVISNLYNSPDKISASAASVLLIGSSEELGAPVTVHQTILPLISYFGKGICTDGIDVLVRIGRLLGVNFIVKQMLPLLEHVVCFCIDLSSMKKPEPVHSWCSLALSDCLITLDGLVALISDELLIHELTKGRLCLHVRVLMQKNLELRVLQFAATSLMSICQRIGQEMTALHVLPQLKELFDEFAFSEKSTDASDSLSWKIRTAEQKFHPESPIKSRMDLVLLLYPSFASLLGMEKLRQGCPTWLLLEQYLLKHHNWKWEYTGRSSRYNMEARPVLKQGPASKHTPKVLLNGSGRSVPQSQGLRNSNHLKLHIHVPVEGQEAVLNPLVHEPWSWFPSPVTCWDGLDIGRFGNPKDENRWKIRASVLSSARAHHGALRSLVVSEDECTVFTSGIDPGFKGSVQKWELASLSCVSSYHAHEEVVNDIGILSSTGKVASCDGTIHVWNSQTGKLISLFSESPSDQDQASSDPSSKNNSNPCNRHASHGLSSGIFDENLYTCMHYLEYMDQLIVGTGFGALRFIDLARGQKLELWGGEAIESGFTSLVSALCSGGSQTKHGDGASVSPSWIAAGFSSGQCRLFDLRENGFISSWRAHDGYVTKLVAPESHLLVSSSLDKTLRIWDLRKSWTPQPFVVKGHNDGVSGFSIWGKDVISISRNNIGIFSLAKSQDEEEQQQQRIIPQKLYMAEKGGRVKSDLSTICVLPFSRLFIVGAHDGHLRICC</sequence>
<accession>F4JY12</accession>
<accession>B5B8Z0</accession>
<accession>Q8VZH9</accession>
<organism evidence="10">
    <name type="scientific">Arabidopsis thaliana</name>
    <name type="common">Mouse-ear cress</name>
    <dbReference type="NCBI Taxonomy" id="3702"/>
    <lineage>
        <taxon>Eukaryota</taxon>
        <taxon>Viridiplantae</taxon>
        <taxon>Streptophyta</taxon>
        <taxon>Embryophyta</taxon>
        <taxon>Tracheophyta</taxon>
        <taxon>Spermatophyta</taxon>
        <taxon>Magnoliopsida</taxon>
        <taxon>eudicotyledons</taxon>
        <taxon>Gunneridae</taxon>
        <taxon>Pentapetalae</taxon>
        <taxon>rosids</taxon>
        <taxon>malvids</taxon>
        <taxon>Brassicales</taxon>
        <taxon>Brassicaceae</taxon>
        <taxon>Camelineae</taxon>
        <taxon>Arabidopsis</taxon>
    </lineage>
</organism>
<evidence type="ECO:0000255" key="1"/>
<evidence type="ECO:0000255" key="2">
    <source>
        <dbReference type="PROSITE-ProRule" id="PRU00026"/>
    </source>
</evidence>
<evidence type="ECO:0000255" key="3">
    <source>
        <dbReference type="PROSITE-ProRule" id="PRU00159"/>
    </source>
</evidence>
<evidence type="ECO:0000256" key="4">
    <source>
        <dbReference type="SAM" id="MobiDB-lite"/>
    </source>
</evidence>
<evidence type="ECO:0000269" key="5">
    <source>
    </source>
</evidence>
<evidence type="ECO:0000303" key="6">
    <source>
    </source>
</evidence>
<evidence type="ECO:0000305" key="7"/>
<evidence type="ECO:0000312" key="8">
    <source>
        <dbReference type="Araport" id="AT5G18525"/>
    </source>
</evidence>
<evidence type="ECO:0000312" key="9">
    <source>
        <dbReference type="EMBL" id="AC069328"/>
    </source>
</evidence>
<evidence type="ECO:0000312" key="10">
    <source>
        <dbReference type="Proteomes" id="UP000006548"/>
    </source>
</evidence>
<gene>
    <name evidence="6" type="primary">GFS12</name>
    <name evidence="6" type="synonym">BCHD</name>
    <name evidence="8" type="ordered locus">At5g18525</name>
    <name evidence="9" type="ORF">T28N17.10</name>
</gene>
<feature type="chain" id="PRO_0000434031" description="Protein GFS12">
    <location>
        <begin position="1"/>
        <end position="1639"/>
    </location>
</feature>
<feature type="domain" description="Protein kinase 1" evidence="1">
    <location>
        <begin position="206"/>
        <end position="294"/>
    </location>
</feature>
<feature type="domain" description="BEACH" evidence="2">
    <location>
        <begin position="336"/>
        <end position="608"/>
    </location>
</feature>
<feature type="domain" description="Protein kinase 2" evidence="1">
    <location>
        <begin position="715"/>
        <end position="788"/>
    </location>
</feature>
<feature type="repeat" description="WD 1" evidence="1">
    <location>
        <begin position="1290"/>
        <end position="1333"/>
    </location>
</feature>
<feature type="repeat" description="WD 2" evidence="1">
    <location>
        <begin position="1336"/>
        <end position="1373"/>
    </location>
</feature>
<feature type="repeat" description="WD 3" evidence="1">
    <location>
        <begin position="1465"/>
        <end position="1499"/>
    </location>
</feature>
<feature type="repeat" description="WD 4" evidence="1">
    <location>
        <begin position="1511"/>
        <end position="1549"/>
    </location>
</feature>
<feature type="repeat" description="WD 5" evidence="1">
    <location>
        <begin position="1609"/>
        <end position="1639"/>
    </location>
</feature>
<feature type="region of interest" description="Disordered" evidence="4">
    <location>
        <begin position="1377"/>
        <end position="1399"/>
    </location>
</feature>
<feature type="compositionally biased region" description="Low complexity" evidence="4">
    <location>
        <begin position="1377"/>
        <end position="1398"/>
    </location>
</feature>
<feature type="sequence conflict" description="In Ref. 3; CAQ77322." evidence="7" ref="3">
    <original>VRIGRLL</original>
    <variation>GDYW</variation>
    <location>
        <begin position="978"/>
        <end position="984"/>
    </location>
</feature>
<name>GFS12_ARATH</name>
<keyword id="KW-0418">Kinase</keyword>
<keyword id="KW-1185">Reference proteome</keyword>
<keyword id="KW-0677">Repeat</keyword>
<keyword id="KW-0808">Transferase</keyword>
<keyword id="KW-0853">WD repeat</keyword>
<protein>
    <recommendedName>
        <fullName evidence="6">Protein GFS12</fullName>
        <ecNumber evidence="3">2.7.10.-</ecNumber>
    </recommendedName>
    <alternativeName>
        <fullName evidence="6">BEACH domain-containing protein D</fullName>
    </alternativeName>
    <alternativeName>
        <fullName evidence="7">BEACH-domain homolog D</fullName>
    </alternativeName>
    <alternativeName>
        <fullName evidence="6">GREEN FLUORESCENT SEED 12</fullName>
    </alternativeName>
</protein>
<dbReference type="EC" id="2.7.10.-" evidence="3"/>
<dbReference type="EMBL" id="AC069328">
    <property type="status" value="NOT_ANNOTATED_CDS"/>
    <property type="molecule type" value="Genomic_DNA"/>
</dbReference>
<dbReference type="EMBL" id="CP002688">
    <property type="protein sequence ID" value="AED92575.1"/>
    <property type="molecule type" value="Genomic_DNA"/>
</dbReference>
<dbReference type="EMBL" id="FM180203">
    <property type="protein sequence ID" value="CAQ77322.1"/>
    <property type="molecule type" value="mRNA"/>
</dbReference>
<dbReference type="EMBL" id="AY064158">
    <property type="protein sequence ID" value="AAL36064.1"/>
    <property type="status" value="ALT_INIT"/>
    <property type="molecule type" value="mRNA"/>
</dbReference>
<dbReference type="EMBL" id="AY143925">
    <property type="protein sequence ID" value="AAN28864.1"/>
    <property type="molecule type" value="mRNA"/>
</dbReference>
<dbReference type="RefSeq" id="NP_974804.4">
    <property type="nucleotide sequence ID" value="NM_203075.7"/>
</dbReference>
<dbReference type="FunCoup" id="F4JY12">
    <property type="interactions" value="2734"/>
</dbReference>
<dbReference type="STRING" id="3702.F4JY12"/>
<dbReference type="iPTMnet" id="F4JY12"/>
<dbReference type="MetOSite" id="F4JY12"/>
<dbReference type="PaxDb" id="3702-AT5G18525.1"/>
<dbReference type="ProteomicsDB" id="224777"/>
<dbReference type="EnsemblPlants" id="AT5G18525.1">
    <property type="protein sequence ID" value="AT5G18525.1"/>
    <property type="gene ID" value="AT5G18525"/>
</dbReference>
<dbReference type="GeneID" id="2745988"/>
<dbReference type="Gramene" id="AT5G18525.1">
    <property type="protein sequence ID" value="AT5G18525.1"/>
    <property type="gene ID" value="AT5G18525"/>
</dbReference>
<dbReference type="KEGG" id="ath:AT5G18525"/>
<dbReference type="Araport" id="AT5G18525"/>
<dbReference type="TAIR" id="AT5G18525">
    <property type="gene designation" value="GFS12"/>
</dbReference>
<dbReference type="eggNOG" id="KOG1786">
    <property type="taxonomic scope" value="Eukaryota"/>
</dbReference>
<dbReference type="HOGENOM" id="CLU_250373_0_0_1"/>
<dbReference type="InParanoid" id="F4JY12"/>
<dbReference type="OMA" id="NKMESCA"/>
<dbReference type="PRO" id="PR:F4JY12"/>
<dbReference type="Proteomes" id="UP000006548">
    <property type="component" value="Chromosome 5"/>
</dbReference>
<dbReference type="ExpressionAtlas" id="F4JY12">
    <property type="expression patterns" value="baseline and differential"/>
</dbReference>
<dbReference type="GO" id="GO:0080008">
    <property type="term" value="C:Cul4-RING E3 ubiquitin ligase complex"/>
    <property type="evidence" value="ECO:0000250"/>
    <property type="project" value="TAIR"/>
</dbReference>
<dbReference type="GO" id="GO:0005524">
    <property type="term" value="F:ATP binding"/>
    <property type="evidence" value="ECO:0007669"/>
    <property type="project" value="InterPro"/>
</dbReference>
<dbReference type="GO" id="GO:0004672">
    <property type="term" value="F:protein kinase activity"/>
    <property type="evidence" value="ECO:0007669"/>
    <property type="project" value="InterPro"/>
</dbReference>
<dbReference type="GO" id="GO:0042742">
    <property type="term" value="P:defense response to bacterium"/>
    <property type="evidence" value="ECO:0000315"/>
    <property type="project" value="TAIR"/>
</dbReference>
<dbReference type="GO" id="GO:0006623">
    <property type="term" value="P:protein targeting to vacuole"/>
    <property type="evidence" value="ECO:0000315"/>
    <property type="project" value="TAIR"/>
</dbReference>
<dbReference type="CDD" id="cd06071">
    <property type="entry name" value="Beach"/>
    <property type="match status" value="1"/>
</dbReference>
<dbReference type="FunFam" id="1.10.510.10:FF:002152">
    <property type="match status" value="1"/>
</dbReference>
<dbReference type="FunFam" id="2.130.10.10:FF:003426">
    <property type="entry name" value="Protein GFS12"/>
    <property type="match status" value="1"/>
</dbReference>
<dbReference type="FunFam" id="1.10.1540.10:FF:000003">
    <property type="entry name" value="WD repeat-containing protein 81 isoform X1"/>
    <property type="match status" value="1"/>
</dbReference>
<dbReference type="Gene3D" id="1.10.1540.10">
    <property type="entry name" value="BEACH domain"/>
    <property type="match status" value="1"/>
</dbReference>
<dbReference type="Gene3D" id="1.10.510.10">
    <property type="entry name" value="Transferase(Phosphotransferase) domain 1"/>
    <property type="match status" value="2"/>
</dbReference>
<dbReference type="Gene3D" id="2.130.10.10">
    <property type="entry name" value="YVTN repeat-like/Quinoprotein amine dehydrogenase"/>
    <property type="match status" value="2"/>
</dbReference>
<dbReference type="InterPro" id="IPR000409">
    <property type="entry name" value="BEACH_dom"/>
</dbReference>
<dbReference type="InterPro" id="IPR036372">
    <property type="entry name" value="BEACH_dom_sf"/>
</dbReference>
<dbReference type="InterPro" id="IPR011009">
    <property type="entry name" value="Kinase-like_dom_sf"/>
</dbReference>
<dbReference type="InterPro" id="IPR000719">
    <property type="entry name" value="Prot_kinase_dom"/>
</dbReference>
<dbReference type="InterPro" id="IPR008266">
    <property type="entry name" value="Tyr_kinase_AS"/>
</dbReference>
<dbReference type="InterPro" id="IPR015943">
    <property type="entry name" value="WD40/YVTN_repeat-like_dom_sf"/>
</dbReference>
<dbReference type="InterPro" id="IPR019775">
    <property type="entry name" value="WD40_repeat_CS"/>
</dbReference>
<dbReference type="InterPro" id="IPR036322">
    <property type="entry name" value="WD40_repeat_dom_sf"/>
</dbReference>
<dbReference type="InterPro" id="IPR001680">
    <property type="entry name" value="WD40_rpt"/>
</dbReference>
<dbReference type="PANTHER" id="PTHR46866">
    <property type="entry name" value="GH12955P"/>
    <property type="match status" value="1"/>
</dbReference>
<dbReference type="PANTHER" id="PTHR46866:SF1">
    <property type="entry name" value="GH12955P"/>
    <property type="match status" value="1"/>
</dbReference>
<dbReference type="Pfam" id="PF02138">
    <property type="entry name" value="Beach"/>
    <property type="match status" value="1"/>
</dbReference>
<dbReference type="Pfam" id="PF00069">
    <property type="entry name" value="Pkinase"/>
    <property type="match status" value="1"/>
</dbReference>
<dbReference type="Pfam" id="PF00400">
    <property type="entry name" value="WD40"/>
    <property type="match status" value="2"/>
</dbReference>
<dbReference type="SMART" id="SM01026">
    <property type="entry name" value="Beach"/>
    <property type="match status" value="1"/>
</dbReference>
<dbReference type="SMART" id="SM00220">
    <property type="entry name" value="S_TKc"/>
    <property type="match status" value="1"/>
</dbReference>
<dbReference type="SMART" id="SM00320">
    <property type="entry name" value="WD40"/>
    <property type="match status" value="5"/>
</dbReference>
<dbReference type="SUPFAM" id="SSF81837">
    <property type="entry name" value="BEACH domain"/>
    <property type="match status" value="1"/>
</dbReference>
<dbReference type="SUPFAM" id="SSF56112">
    <property type="entry name" value="Protein kinase-like (PK-like)"/>
    <property type="match status" value="2"/>
</dbReference>
<dbReference type="SUPFAM" id="SSF50978">
    <property type="entry name" value="WD40 repeat-like"/>
    <property type="match status" value="1"/>
</dbReference>
<dbReference type="PROSITE" id="PS50197">
    <property type="entry name" value="BEACH"/>
    <property type="match status" value="1"/>
</dbReference>
<dbReference type="PROSITE" id="PS00109">
    <property type="entry name" value="PROTEIN_KINASE_TYR"/>
    <property type="match status" value="1"/>
</dbReference>
<dbReference type="PROSITE" id="PS00678">
    <property type="entry name" value="WD_REPEATS_1"/>
    <property type="match status" value="1"/>
</dbReference>
<dbReference type="PROSITE" id="PS50082">
    <property type="entry name" value="WD_REPEATS_2"/>
    <property type="match status" value="1"/>
</dbReference>
<dbReference type="PROSITE" id="PS50294">
    <property type="entry name" value="WD_REPEATS_REGION"/>
    <property type="match status" value="2"/>
</dbReference>